<proteinExistence type="evidence at protein level"/>
<dbReference type="EMBL" id="Y19035">
    <property type="protein sequence ID" value="CAB54040.1"/>
    <property type="molecule type" value="mRNA"/>
</dbReference>
<dbReference type="CCDS" id="CCDS17428.1"/>
<dbReference type="RefSeq" id="NP_067345.1">
    <property type="nucleotide sequence ID" value="NM_021370.2"/>
</dbReference>
<dbReference type="RefSeq" id="XP_006501884.1">
    <property type="nucleotide sequence ID" value="XM_006501821.1"/>
</dbReference>
<dbReference type="RefSeq" id="XP_006501886.1">
    <property type="nucleotide sequence ID" value="XM_006501823.2"/>
</dbReference>
<dbReference type="SMR" id="Q9R0Y1"/>
<dbReference type="FunCoup" id="Q9R0Y1">
    <property type="interactions" value="127"/>
</dbReference>
<dbReference type="STRING" id="10090.ENSMUSP00000029641"/>
<dbReference type="GlyCosmos" id="Q9R0Y1">
    <property type="glycosylation" value="2 sites, No reported glycans"/>
</dbReference>
<dbReference type="GlyGen" id="Q9R0Y1">
    <property type="glycosylation" value="2 sites"/>
</dbReference>
<dbReference type="PhosphoSitePlus" id="Q9R0Y1"/>
<dbReference type="PaxDb" id="10090-ENSMUSP00000029641"/>
<dbReference type="Antibodypedia" id="48122">
    <property type="antibodies" value="110 antibodies from 20 providers"/>
</dbReference>
<dbReference type="DNASU" id="58170"/>
<dbReference type="Ensembl" id="ENSMUST00000029641.10">
    <property type="protein sequence ID" value="ENSMUSP00000029641.4"/>
    <property type="gene ID" value="ENSMUSG00000028008.11"/>
</dbReference>
<dbReference type="GeneID" id="58170"/>
<dbReference type="KEGG" id="mmu:58170"/>
<dbReference type="UCSC" id="uc008pop.1">
    <property type="organism name" value="mouse"/>
</dbReference>
<dbReference type="AGR" id="MGI:1929259"/>
<dbReference type="CTD" id="51802"/>
<dbReference type="MGI" id="MGI:1929259">
    <property type="gene designation" value="Asic5"/>
</dbReference>
<dbReference type="VEuPathDB" id="HostDB:ENSMUSG00000028008"/>
<dbReference type="eggNOG" id="KOG4294">
    <property type="taxonomic scope" value="Eukaryota"/>
</dbReference>
<dbReference type="GeneTree" id="ENSGT00940000160549"/>
<dbReference type="InParanoid" id="Q9R0Y1"/>
<dbReference type="OMA" id="HQNFSIA"/>
<dbReference type="OrthoDB" id="6021021at2759"/>
<dbReference type="PhylomeDB" id="Q9R0Y1"/>
<dbReference type="TreeFam" id="TF330663"/>
<dbReference type="Reactome" id="R-MMU-2672351">
    <property type="pathway name" value="Stimuli-sensing channels"/>
</dbReference>
<dbReference type="BioGRID-ORCS" id="58170">
    <property type="hits" value="4 hits in 78 CRISPR screens"/>
</dbReference>
<dbReference type="PRO" id="PR:Q9R0Y1"/>
<dbReference type="Proteomes" id="UP000000589">
    <property type="component" value="Chromosome 3"/>
</dbReference>
<dbReference type="RNAct" id="Q9R0Y1">
    <property type="molecule type" value="protein"/>
</dbReference>
<dbReference type="Bgee" id="ENSMUSG00000028008">
    <property type="expression patterns" value="Expressed in mesodermal cell in embryo and 12 other cell types or tissues"/>
</dbReference>
<dbReference type="ExpressionAtlas" id="Q9R0Y1">
    <property type="expression patterns" value="baseline and differential"/>
</dbReference>
<dbReference type="GO" id="GO:0016324">
    <property type="term" value="C:apical plasma membrane"/>
    <property type="evidence" value="ECO:0000250"/>
    <property type="project" value="UniProtKB"/>
</dbReference>
<dbReference type="GO" id="GO:0016020">
    <property type="term" value="C:membrane"/>
    <property type="evidence" value="ECO:0000305"/>
    <property type="project" value="MGI"/>
</dbReference>
<dbReference type="GO" id="GO:0005886">
    <property type="term" value="C:plasma membrane"/>
    <property type="evidence" value="ECO:0000314"/>
    <property type="project" value="UniProtKB"/>
</dbReference>
<dbReference type="GO" id="GO:0160228">
    <property type="term" value="F:bile acid-gated sodium channel activity"/>
    <property type="evidence" value="ECO:0000314"/>
    <property type="project" value="UniProtKB"/>
</dbReference>
<dbReference type="GO" id="GO:0015280">
    <property type="term" value="F:ligand-gated sodium channel activity"/>
    <property type="evidence" value="ECO:0000266"/>
    <property type="project" value="MGI"/>
</dbReference>
<dbReference type="GO" id="GO:0015252">
    <property type="term" value="F:proton channel activity"/>
    <property type="evidence" value="ECO:0000314"/>
    <property type="project" value="MGI"/>
</dbReference>
<dbReference type="GO" id="GO:0005272">
    <property type="term" value="F:sodium channel activity"/>
    <property type="evidence" value="ECO:0000314"/>
    <property type="project" value="MGI"/>
</dbReference>
<dbReference type="GO" id="GO:0019228">
    <property type="term" value="P:neuronal action potential"/>
    <property type="evidence" value="ECO:0000315"/>
    <property type="project" value="UniProtKB"/>
</dbReference>
<dbReference type="GO" id="GO:0098719">
    <property type="term" value="P:sodium ion import across plasma membrane"/>
    <property type="evidence" value="ECO:0000250"/>
    <property type="project" value="UniProtKB"/>
</dbReference>
<dbReference type="GO" id="GO:0035725">
    <property type="term" value="P:sodium ion transmembrane transport"/>
    <property type="evidence" value="ECO:0000314"/>
    <property type="project" value="MGI"/>
</dbReference>
<dbReference type="FunFam" id="2.60.470.10:FF:000006">
    <property type="entry name" value="Acid-sensing ion channel 5"/>
    <property type="match status" value="1"/>
</dbReference>
<dbReference type="FunFam" id="1.10.287.770:FF:000001">
    <property type="entry name" value="Acid-sensing ion channel subunit 1"/>
    <property type="match status" value="1"/>
</dbReference>
<dbReference type="Gene3D" id="2.60.470.10">
    <property type="entry name" value="Acid-sensing ion channels like domains"/>
    <property type="match status" value="1"/>
</dbReference>
<dbReference type="Gene3D" id="1.10.287.770">
    <property type="entry name" value="YojJ-like"/>
    <property type="match status" value="1"/>
</dbReference>
<dbReference type="InterPro" id="IPR001873">
    <property type="entry name" value="ENaC"/>
</dbReference>
<dbReference type="PANTHER" id="PTHR11690:SF286">
    <property type="entry name" value="ACID-SENSING ION CHANNEL 5"/>
    <property type="match status" value="1"/>
</dbReference>
<dbReference type="PANTHER" id="PTHR11690">
    <property type="entry name" value="AMILORIDE-SENSITIVE SODIUM CHANNEL-RELATED"/>
    <property type="match status" value="1"/>
</dbReference>
<dbReference type="Pfam" id="PF00858">
    <property type="entry name" value="ASC"/>
    <property type="match status" value="1"/>
</dbReference>
<dbReference type="PRINTS" id="PR01078">
    <property type="entry name" value="AMINACHANNEL"/>
</dbReference>
<reference key="1">
    <citation type="journal article" date="1999" name="J. Physiol. (Lond.)">
        <title>Cloning and functional expression of a novel degenerin-like Na+ channel gene in mammals.</title>
        <authorList>
            <person name="Sakai H."/>
            <person name="Lingueglia E."/>
            <person name="Champigny G."/>
            <person name="Mattei M.-G."/>
            <person name="Lazdunski M."/>
        </authorList>
    </citation>
    <scope>NUCLEOTIDE SEQUENCE [MRNA]</scope>
    <scope>TISSUE SPECIFICITY</scope>
    <source>
        <strain>BALB/cJ</strain>
        <tissue>Brain</tissue>
        <tissue>Intestine</tissue>
        <tissue>Liver</tissue>
    </source>
</reference>
<reference key="2">
    <citation type="journal article" date="2010" name="J. Biol. Chem.">
        <title>A single amino acid tunes Ca2+ inhibition of brain liver intestine Na+ channel (BLINaC).</title>
        <authorList>
            <person name="Wiemuth D."/>
            <person name="Gruender S."/>
        </authorList>
    </citation>
    <scope>FUNCTION</scope>
    <scope>TRANSPORTER ACTIVITY</scope>
    <scope>ACTIVITY REGULATION</scope>
</reference>
<reference key="3">
    <citation type="journal article" date="2012" name="FASEB J.">
        <title>BASIC--a bile acid-sensitive ion channel highly expressed in bile ducts.</title>
        <authorList>
            <person name="Wiemuth D."/>
            <person name="Sahin H."/>
            <person name="Falkenburger B.H."/>
            <person name="Lefevre C.M."/>
            <person name="Wasmuth H.E."/>
            <person name="Gruender S."/>
        </authorList>
    </citation>
    <scope>FUNCTION</scope>
    <scope>TRANSPORTER ACTIVITY</scope>
    <scope>TISSUE SPECIFICITY</scope>
</reference>
<reference key="4">
    <citation type="journal article" date="2014" name="PLoS ONE">
        <title>Restrictive expression of acid-sensing ion channel 5 (asic5) in unipolar brush cells of the vestibulocerebellum.</title>
        <authorList>
            <person name="Boiko N."/>
            <person name="Kucher V."/>
            <person name="Wang B."/>
            <person name="Stockand J.D."/>
        </authorList>
    </citation>
    <scope>TISSUE SPECIFICITY</scope>
</reference>
<reference key="5">
    <citation type="journal article" date="2014" name="PLoS ONE">
        <title>The bile acid-sensitive ion channel (BASIC) is activated by alterations of its membrane environment.</title>
        <authorList>
            <person name="Schmidt A."/>
            <person name="Lenzig P."/>
            <person name="Oslender-Bujotzek A."/>
            <person name="Kusch J."/>
            <person name="Lucas S.D."/>
            <person name="Gruender S."/>
            <person name="Wiemuth D."/>
        </authorList>
    </citation>
    <scope>FUNCTION</scope>
</reference>
<reference key="6">
    <citation type="journal article" date="2020" name="Sci. Rep.">
        <title>Cerebellar Ataxia Caused by Type II Unipolar Brush Cell Dysfunction in the Asic5 Knockout Mouse.</title>
        <authorList>
            <person name="Kreko-Pierce T."/>
            <person name="Boiko N."/>
            <person name="Harbidge D.G."/>
            <person name="Marcus D.C."/>
            <person name="Stockand J.D."/>
            <person name="Pugh J.R."/>
        </authorList>
    </citation>
    <scope>FUNCTION</scope>
    <scope>TISSUE SPECIFICITY</scope>
    <scope>DISRUPTION PHENOTYPE</scope>
</reference>
<gene>
    <name evidence="12" type="primary">Asic5</name>
    <name evidence="12" type="synonym">Accn5</name>
</gene>
<sequence>MEHTEKSQVHAEKGLLGKIKRYLSKRPLPSPTDRKKFDQDFAMSTSFHGIHNIAQNQNKVRKVIWLAVVLGSVSLLVWQIYSRLVNYFTWPTTTSIEVQYVEKIEFPAVTLCNLNRFQTEAVSRFGIIFFLWDIVSKVLRLQEISANNTGSPETLDFVTNHQNFSITEFVKNNGFYLNNDTLVHCEFFGKTCSPKDFKHVFTEYGNCFTFNYGENIQNKNKVSVSGRGLKLLLDVHQEEFTDNPVPGFADAGVIFVIHSPKKEPQFDGLGLSSPVGMHARVTIRQLKTVHQEYPWGECNPNIKLRNFITYSTYGCLKECKARHIQRLCGCLPFLLPGNGVECDLLEYYNCVSPILDHIERKGLCTMGTHNSSCPVSCEETEYPATVSYSTFPSQRATRFLAKKLNQSQEYIRENLVNIEINYSDLNYKITQQQKAVSVPELLADVGGQLGLFCGASLITIIEIIEYFFTNFYWVLIFFLLKILETIQRTSPPQAV</sequence>
<feature type="chain" id="PRO_0000335598" description="Bile acid-sensitive ion channel">
    <location>
        <begin position="1"/>
        <end position="495"/>
    </location>
</feature>
<feature type="topological domain" description="Cytoplasmic" evidence="1">
    <location>
        <begin position="1"/>
        <end position="61"/>
    </location>
</feature>
<feature type="transmembrane region" description="Helical" evidence="3">
    <location>
        <begin position="62"/>
        <end position="82"/>
    </location>
</feature>
<feature type="topological domain" description="Extracellular" evidence="1">
    <location>
        <begin position="83"/>
        <end position="459"/>
    </location>
</feature>
<feature type="transmembrane region" description="Helical" evidence="3">
    <location>
        <begin position="460"/>
        <end position="480"/>
    </location>
</feature>
<feature type="topological domain" description="Cytoplasmic" evidence="1">
    <location>
        <begin position="481"/>
        <end position="495"/>
    </location>
</feature>
<feature type="region of interest" description="Binds the plasma membrane and stabilizes the channel in the closed state" evidence="2">
    <location>
        <begin position="1"/>
        <end position="30"/>
    </location>
</feature>
<feature type="short sequence motif" description="GAS motif; ion selectivity filter" evidence="1">
    <location>
        <begin position="454"/>
        <end position="456"/>
    </location>
</feature>
<feature type="glycosylation site" description="N-linked (GlcNAc...) asparagine" evidence="3">
    <location>
        <position position="147"/>
    </location>
</feature>
<feature type="glycosylation site" description="N-linked (GlcNAc...) asparagine" evidence="3">
    <location>
        <position position="163"/>
    </location>
</feature>
<feature type="glycosylation site" description="N-linked (GlcNAc...) asparagine" evidence="3">
    <location>
        <position position="179"/>
    </location>
</feature>
<feature type="glycosylation site" description="N-linked (GlcNAc...) asparagine" evidence="3">
    <location>
        <position position="370"/>
    </location>
</feature>
<feature type="glycosylation site" description="N-linked (GlcNAc...) asparagine" evidence="3">
    <location>
        <position position="405"/>
    </location>
</feature>
<feature type="glycosylation site" description="N-linked (GlcNAc...) asparagine" evidence="3">
    <location>
        <position position="421"/>
    </location>
</feature>
<feature type="disulfide bond" evidence="1">
    <location>
        <begin position="112"/>
        <end position="207"/>
    </location>
</feature>
<feature type="disulfide bond" evidence="1">
    <location>
        <begin position="185"/>
        <end position="192"/>
    </location>
</feature>
<feature type="disulfide bond" evidence="1">
    <location>
        <begin position="298"/>
        <end position="377"/>
    </location>
</feature>
<feature type="disulfide bond" evidence="1">
    <location>
        <begin position="315"/>
        <end position="373"/>
    </location>
</feature>
<feature type="disulfide bond" evidence="1">
    <location>
        <begin position="328"/>
        <end position="350"/>
    </location>
</feature>
<feature type="disulfide bond" evidence="1">
    <location>
        <begin position="330"/>
        <end position="342"/>
    </location>
</feature>
<keyword id="KW-1003">Cell membrane</keyword>
<keyword id="KW-1015">Disulfide bond</keyword>
<keyword id="KW-0325">Glycoprotein</keyword>
<keyword id="KW-0407">Ion channel</keyword>
<keyword id="KW-0406">Ion transport</keyword>
<keyword id="KW-0472">Membrane</keyword>
<keyword id="KW-1185">Reference proteome</keyword>
<keyword id="KW-0915">Sodium</keyword>
<keyword id="KW-0894">Sodium channel</keyword>
<keyword id="KW-0739">Sodium transport</keyword>
<keyword id="KW-0812">Transmembrane</keyword>
<keyword id="KW-1133">Transmembrane helix</keyword>
<keyword id="KW-0813">Transport</keyword>
<evidence type="ECO:0000250" key="1">
    <source>
        <dbReference type="UniProtKB" id="P78348"/>
    </source>
</evidence>
<evidence type="ECO:0000250" key="2">
    <source>
        <dbReference type="UniProtKB" id="Q9R0W5"/>
    </source>
</evidence>
<evidence type="ECO:0000255" key="3"/>
<evidence type="ECO:0000269" key="4">
    <source>
    </source>
</evidence>
<evidence type="ECO:0000269" key="5">
    <source>
    </source>
</evidence>
<evidence type="ECO:0000269" key="6">
    <source>
    </source>
</evidence>
<evidence type="ECO:0000269" key="7">
    <source>
    </source>
</evidence>
<evidence type="ECO:0000269" key="8">
    <source>
    </source>
</evidence>
<evidence type="ECO:0000303" key="9">
    <source>
    </source>
</evidence>
<evidence type="ECO:0000303" key="10">
    <source>
    </source>
</evidence>
<evidence type="ECO:0000305" key="11"/>
<evidence type="ECO:0000312" key="12">
    <source>
        <dbReference type="MGI" id="MGI:1929259"/>
    </source>
</evidence>
<organism>
    <name type="scientific">Mus musculus</name>
    <name type="common">Mouse</name>
    <dbReference type="NCBI Taxonomy" id="10090"/>
    <lineage>
        <taxon>Eukaryota</taxon>
        <taxon>Metazoa</taxon>
        <taxon>Chordata</taxon>
        <taxon>Craniata</taxon>
        <taxon>Vertebrata</taxon>
        <taxon>Euteleostomi</taxon>
        <taxon>Mammalia</taxon>
        <taxon>Eutheria</taxon>
        <taxon>Euarchontoglires</taxon>
        <taxon>Glires</taxon>
        <taxon>Rodentia</taxon>
        <taxon>Myomorpha</taxon>
        <taxon>Muroidea</taxon>
        <taxon>Muridae</taxon>
        <taxon>Murinae</taxon>
        <taxon>Mus</taxon>
        <taxon>Mus</taxon>
    </lineage>
</organism>
<comment type="function">
    <text evidence="5 6 8">Forms bile acid-gated sodium channels and may play a role in bile acid-dependent absorption and secretion by epithelial cells of the bile ducts (PubMed:20656685, PubMed:22735174). Displays high selectivity for sodium ions but can also permit the permeation of other cations (PubMed:20656685, PubMed:22735174). The gating could be indirect and the consequence of alterations of the membrane environment of the channel by bile acids (PubMed:20656685). As a sodium channel of type II unipolar brush cells of the vestibulocerebellum, controlling the electrical activity of these cells, could play a role in motor coordination and balance (PubMed:32034189).</text>
</comment>
<comment type="catalytic activity">
    <reaction evidence="5 6">
        <text>Na(+)(in) = Na(+)(out)</text>
        <dbReference type="Rhea" id="RHEA:34963"/>
        <dbReference type="ChEBI" id="CHEBI:29101"/>
    </reaction>
</comment>
<comment type="catalytic activity">
    <reaction evidence="2">
        <text>Li(+)(in) = Li(+)(out)</text>
        <dbReference type="Rhea" id="RHEA:78551"/>
        <dbReference type="ChEBI" id="CHEBI:49713"/>
    </reaction>
</comment>
<comment type="catalytic activity">
    <reaction evidence="2">
        <text>K(+)(in) = K(+)(out)</text>
        <dbReference type="Rhea" id="RHEA:29463"/>
        <dbReference type="ChEBI" id="CHEBI:29103"/>
    </reaction>
</comment>
<comment type="catalytic activity">
    <reaction evidence="5">
        <text>H(+)(in) = H(+)(out)</text>
        <dbReference type="Rhea" id="RHEA:34979"/>
        <dbReference type="ChEBI" id="CHEBI:15378"/>
    </reaction>
</comment>
<comment type="activity regulation">
    <text evidence="5">Inhibited by the diuretic drug amiloride (PubMed:20656685). Contrary to its rat ortholog it is not inhibited by Ca(2+) (PubMed:20656685).</text>
</comment>
<comment type="subunit">
    <text evidence="1">Forms homotrimeric channels.</text>
</comment>
<comment type="subcellular location">
    <subcellularLocation>
        <location evidence="2">Apical cell membrane</location>
        <topology evidence="3">Multi-pass membrane protein</topology>
    </subcellularLocation>
    <subcellularLocation>
        <location evidence="2">Cell membrane</location>
        <topology evidence="3">Multi-pass membrane protein</topology>
    </subcellularLocation>
</comment>
<comment type="tissue specificity">
    <text evidence="4 6 7 8">Expressed by cholangiocytes (at protein level) (PubMed:22735174). Detected in cerebellum, brainstem, kidney, liver, hepatocytes, lung, intestine and embryo (PubMed:10457052, PubMed:24663811, PubMed:32034189). In the cerebellum, restricted to interneurons in the granular layer, specifically in GRM1-expressing unipolar brush cells of the vestibulocerebellum (PubMed:24663811, PubMed:32034189).</text>
</comment>
<comment type="disruption phenotype">
    <text evidence="8">Knockout mice lacking Asic5 have impaired motor coordination which is associated with altered electrical activity of type II unipolar brush cells of the vestibulocerebellum.</text>
</comment>
<comment type="similarity">
    <text evidence="11">Belongs to the amiloride-sensitive sodium channel (TC 1.A.6) family. ASIC5 subfamily.</text>
</comment>
<name>ASIC5_MOUSE</name>
<accession>Q9R0Y1</accession>
<protein>
    <recommendedName>
        <fullName evidence="10">Bile acid-sensitive ion channel</fullName>
        <shortName evidence="10">BASIC</shortName>
    </recommendedName>
    <alternativeName>
        <fullName evidence="12">Acid-sensing ion channel subunit family member 5</fullName>
    </alternativeName>
    <alternativeName>
        <fullName evidence="12">Amiloride-sensitive cation channel 5</fullName>
    </alternativeName>
    <alternativeName>
        <fullName evidence="9">Brain-liver-intestine amiloride-sensitive Na(+) channel</fullName>
        <shortName evidence="9">BLINaC</shortName>
    </alternativeName>
</protein>